<keyword id="KW-0067">ATP-binding</keyword>
<keyword id="KW-0460">Magnesium</keyword>
<keyword id="KW-0511">Multifunctional enzyme</keyword>
<keyword id="KW-0547">Nucleotide-binding</keyword>
<keyword id="KW-0548">Nucleotidyltransferase</keyword>
<keyword id="KW-0808">Transferase</keyword>
<name>GLNE_SALSV</name>
<dbReference type="EC" id="2.7.7.89" evidence="1"/>
<dbReference type="EC" id="2.7.7.42" evidence="1"/>
<dbReference type="EMBL" id="CP001127">
    <property type="protein sequence ID" value="ACF91730.1"/>
    <property type="molecule type" value="Genomic_DNA"/>
</dbReference>
<dbReference type="RefSeq" id="WP_000188297.1">
    <property type="nucleotide sequence ID" value="NC_011094.1"/>
</dbReference>
<dbReference type="SMR" id="B4TVT5"/>
<dbReference type="KEGG" id="sew:SeSA_A3391"/>
<dbReference type="HOGENOM" id="CLU_006233_0_1_6"/>
<dbReference type="Proteomes" id="UP000001865">
    <property type="component" value="Chromosome"/>
</dbReference>
<dbReference type="GO" id="GO:0005829">
    <property type="term" value="C:cytosol"/>
    <property type="evidence" value="ECO:0007669"/>
    <property type="project" value="TreeGrafter"/>
</dbReference>
<dbReference type="GO" id="GO:0008882">
    <property type="term" value="F:[glutamate-ammonia-ligase] adenylyltransferase activity"/>
    <property type="evidence" value="ECO:0007669"/>
    <property type="project" value="UniProtKB-UniRule"/>
</dbReference>
<dbReference type="GO" id="GO:0047388">
    <property type="term" value="F:[glutamine synthetase]-adenylyl-L-tyrosine phosphorylase activity"/>
    <property type="evidence" value="ECO:0007669"/>
    <property type="project" value="UniProtKB-EC"/>
</dbReference>
<dbReference type="GO" id="GO:0005524">
    <property type="term" value="F:ATP binding"/>
    <property type="evidence" value="ECO:0007669"/>
    <property type="project" value="UniProtKB-UniRule"/>
</dbReference>
<dbReference type="GO" id="GO:0000287">
    <property type="term" value="F:magnesium ion binding"/>
    <property type="evidence" value="ECO:0007669"/>
    <property type="project" value="UniProtKB-UniRule"/>
</dbReference>
<dbReference type="GO" id="GO:0000820">
    <property type="term" value="P:regulation of glutamine family amino acid metabolic process"/>
    <property type="evidence" value="ECO:0007669"/>
    <property type="project" value="UniProtKB-UniRule"/>
</dbReference>
<dbReference type="CDD" id="cd05401">
    <property type="entry name" value="NT_GlnE_GlnD_like"/>
    <property type="match status" value="2"/>
</dbReference>
<dbReference type="FunFam" id="1.10.4050.10:FF:000001">
    <property type="entry name" value="Bifunctional glutamine synthetase adenylyltransferase/adenylyl-removing enzyme"/>
    <property type="match status" value="1"/>
</dbReference>
<dbReference type="FunFam" id="1.20.120.1510:FF:000001">
    <property type="entry name" value="Bifunctional glutamine synthetase adenylyltransferase/adenylyl-removing enzyme"/>
    <property type="match status" value="1"/>
</dbReference>
<dbReference type="FunFam" id="1.20.120.330:FF:000005">
    <property type="entry name" value="Bifunctional glutamine synthetase adenylyltransferase/adenylyl-removing enzyme"/>
    <property type="match status" value="1"/>
</dbReference>
<dbReference type="FunFam" id="1.20.120.330:FF:000008">
    <property type="entry name" value="Bifunctional glutamine synthetase adenylyltransferase/adenylyl-removing enzyme"/>
    <property type="match status" value="1"/>
</dbReference>
<dbReference type="FunFam" id="3.30.460.10:FF:000009">
    <property type="entry name" value="Bifunctional glutamine synthetase adenylyltransferase/adenylyl-removing enzyme"/>
    <property type="match status" value="1"/>
</dbReference>
<dbReference type="FunFam" id="3.30.460.10:FF:000014">
    <property type="entry name" value="Bifunctional glutamine synthetase adenylyltransferase/adenylyl-removing enzyme"/>
    <property type="match status" value="1"/>
</dbReference>
<dbReference type="Gene3D" id="1.20.120.1510">
    <property type="match status" value="1"/>
</dbReference>
<dbReference type="Gene3D" id="3.30.460.10">
    <property type="entry name" value="Beta Polymerase, domain 2"/>
    <property type="match status" value="2"/>
</dbReference>
<dbReference type="Gene3D" id="1.10.4050.10">
    <property type="entry name" value="Glutamine synthase adenylyltransferase GlnE"/>
    <property type="match status" value="1"/>
</dbReference>
<dbReference type="Gene3D" id="1.20.120.330">
    <property type="entry name" value="Nucleotidyltransferases domain 2"/>
    <property type="match status" value="2"/>
</dbReference>
<dbReference type="HAMAP" id="MF_00802">
    <property type="entry name" value="GlnE"/>
    <property type="match status" value="1"/>
</dbReference>
<dbReference type="InterPro" id="IPR023057">
    <property type="entry name" value="GlnE"/>
</dbReference>
<dbReference type="InterPro" id="IPR005190">
    <property type="entry name" value="GlnE_rpt_dom"/>
</dbReference>
<dbReference type="InterPro" id="IPR043519">
    <property type="entry name" value="NT_sf"/>
</dbReference>
<dbReference type="InterPro" id="IPR013546">
    <property type="entry name" value="PII_UdlTrfase/GS_AdlTrfase"/>
</dbReference>
<dbReference type="NCBIfam" id="NF008292">
    <property type="entry name" value="PRK11072.1"/>
    <property type="match status" value="1"/>
</dbReference>
<dbReference type="PANTHER" id="PTHR30621:SF0">
    <property type="entry name" value="BIFUNCTIONAL GLUTAMINE SYNTHETASE ADENYLYLTRANSFERASE_ADENYLYL-REMOVING ENZYME"/>
    <property type="match status" value="1"/>
</dbReference>
<dbReference type="PANTHER" id="PTHR30621">
    <property type="entry name" value="GLUTAMINE SYNTHETASE ADENYLYLTRANSFERASE"/>
    <property type="match status" value="1"/>
</dbReference>
<dbReference type="Pfam" id="PF08335">
    <property type="entry name" value="GlnD_UR_UTase"/>
    <property type="match status" value="2"/>
</dbReference>
<dbReference type="Pfam" id="PF03710">
    <property type="entry name" value="GlnE"/>
    <property type="match status" value="2"/>
</dbReference>
<dbReference type="SUPFAM" id="SSF81301">
    <property type="entry name" value="Nucleotidyltransferase"/>
    <property type="match status" value="2"/>
</dbReference>
<dbReference type="SUPFAM" id="SSF81593">
    <property type="entry name" value="Nucleotidyltransferase substrate binding subunit/domain"/>
    <property type="match status" value="2"/>
</dbReference>
<evidence type="ECO:0000255" key="1">
    <source>
        <dbReference type="HAMAP-Rule" id="MF_00802"/>
    </source>
</evidence>
<sequence length="947" mass="107961">MTPLSSPLSQYWQTVVERLPEGFTETSLSAQAKSVLTFSDFALDSVIAHPEWLAELESASPQADEWRHYAGWLQEALAGVCDDASLMRELRLFRRRIMVRIAWAQTLSLVDDETILQQLSHLAETLIVGARDWLYAACCREWGTPCNPQGVPQPLLILGMGKLGGGELNFSSDIDLIFAWPEHGETRGGRRELDNAQFFTRLGQRLIKALDQPTMDGFVYRVDMRLRPFGDSGPLVLSFAALEDYYQEQGRDWERYAMVKARLMGDNDDAWSRELRAMLRPFVFRRYIDFSVIQSLRNMKGMIAREVRRRGLKDNIKLGAGGIREIEFIVQVFQLIRGGREPSLQSRSLLPTLDAIAALHLLPENDVAQLRVAYLFLRRLENLLQSINDEQTQTLPADDLNRARLAWGMKAENWPQLVGELTDHMANVRRVFNELIGDDEADTPQEEERSEPWREVWQDALQEDDSTPVLAHLADEDRRQVLTLIADFRKELDKRPIGPRGRQVLDQLMPHLLADVCSREDAAVTLSRITPLLAGIVTRTTYLELLSEFPGALKHLIMLCAASPMIASQLARYPLLLDELLDPGTLYQPTATDAYRDELRQYLLRVPEEDEEQQLEALRQFKQAQLLRIAAADIAGTLPVMKVSDHLTWLAEAMIDAVVQQAWTQMVARYGQPAHLDERQGRGFAVVGYGKLGGWELGYSSDLDLIFLHDCPMDVMTNGEREIDGRQFYLRLAQRIMHLFSTRTSSGILYEVDARLRPSGAAGMLVTSADAFADYQQHEAWTWEHQALVRARVVYGDPQLTSQFDAVRRTIMTTARDGKTLQTEVREMREKMRAHLGNKHRDRFDIKADEGGITDIEFIAQYLVLRYAHEKPKLTRWSDNVRILELLAQNGIMDEHEAQALTVAYTTLRDELHHLALQELPGHVAQTCFSKERALVQASWRKWLVAV</sequence>
<proteinExistence type="inferred from homology"/>
<feature type="chain" id="PRO_1000133917" description="Bifunctional glutamine synthetase adenylyltransferase/adenylyl-removing enzyme">
    <location>
        <begin position="1"/>
        <end position="947"/>
    </location>
</feature>
<feature type="region of interest" description="Adenylyl removase" evidence="1">
    <location>
        <begin position="1"/>
        <end position="440"/>
    </location>
</feature>
<feature type="region of interest" description="Adenylyl transferase" evidence="1">
    <location>
        <begin position="450"/>
        <end position="947"/>
    </location>
</feature>
<accession>B4TVT5</accession>
<reference key="1">
    <citation type="journal article" date="2011" name="J. Bacteriol.">
        <title>Comparative genomics of 28 Salmonella enterica isolates: evidence for CRISPR-mediated adaptive sublineage evolution.</title>
        <authorList>
            <person name="Fricke W.F."/>
            <person name="Mammel M.K."/>
            <person name="McDermott P.F."/>
            <person name="Tartera C."/>
            <person name="White D.G."/>
            <person name="Leclerc J.E."/>
            <person name="Ravel J."/>
            <person name="Cebula T.A."/>
        </authorList>
    </citation>
    <scope>NUCLEOTIDE SEQUENCE [LARGE SCALE GENOMIC DNA]</scope>
    <source>
        <strain>CVM19633</strain>
    </source>
</reference>
<organism>
    <name type="scientific">Salmonella schwarzengrund (strain CVM19633)</name>
    <dbReference type="NCBI Taxonomy" id="439843"/>
    <lineage>
        <taxon>Bacteria</taxon>
        <taxon>Pseudomonadati</taxon>
        <taxon>Pseudomonadota</taxon>
        <taxon>Gammaproteobacteria</taxon>
        <taxon>Enterobacterales</taxon>
        <taxon>Enterobacteriaceae</taxon>
        <taxon>Salmonella</taxon>
    </lineage>
</organism>
<gene>
    <name evidence="1" type="primary">glnE</name>
    <name type="ordered locus">SeSA_A3391</name>
</gene>
<protein>
    <recommendedName>
        <fullName evidence="1">Bifunctional glutamine synthetase adenylyltransferase/adenylyl-removing enzyme</fullName>
    </recommendedName>
    <alternativeName>
        <fullName evidence="1">ATP:glutamine synthetase adenylyltransferase</fullName>
    </alternativeName>
    <alternativeName>
        <fullName evidence="1">ATase</fullName>
    </alternativeName>
    <domain>
        <recommendedName>
            <fullName evidence="1">Glutamine synthetase adenylyl-L-tyrosine phosphorylase</fullName>
            <ecNumber evidence="1">2.7.7.89</ecNumber>
        </recommendedName>
        <alternativeName>
            <fullName evidence="1">Adenylyl removase</fullName>
            <shortName evidence="1">AR</shortName>
            <shortName evidence="1">AT-N</shortName>
        </alternativeName>
    </domain>
    <domain>
        <recommendedName>
            <fullName evidence="1">Glutamine synthetase adenylyl transferase</fullName>
            <ecNumber evidence="1">2.7.7.42</ecNumber>
        </recommendedName>
        <alternativeName>
            <fullName evidence="1">Adenylyl transferase</fullName>
            <shortName evidence="1">AT</shortName>
            <shortName evidence="1">AT-C</shortName>
        </alternativeName>
    </domain>
</protein>
<comment type="function">
    <text evidence="1">Involved in the regulation of glutamine synthetase GlnA, a key enzyme in the process to assimilate ammonia. When cellular nitrogen levels are high, the C-terminal adenylyl transferase (AT) inactivates GlnA by covalent transfer of an adenylyl group from ATP to specific tyrosine residue of GlnA, thus reducing its activity. Conversely, when nitrogen levels are low, the N-terminal adenylyl removase (AR) activates GlnA by removing the adenylyl group by phosphorolysis, increasing its activity. The regulatory region of GlnE binds the signal transduction protein PII (GlnB) which indicates the nitrogen status of the cell.</text>
</comment>
<comment type="catalytic activity">
    <reaction evidence="1">
        <text>[glutamine synthetase]-O(4)-(5'-adenylyl)-L-tyrosine + phosphate = [glutamine synthetase]-L-tyrosine + ADP</text>
        <dbReference type="Rhea" id="RHEA:43716"/>
        <dbReference type="Rhea" id="RHEA-COMP:10660"/>
        <dbReference type="Rhea" id="RHEA-COMP:10661"/>
        <dbReference type="ChEBI" id="CHEBI:43474"/>
        <dbReference type="ChEBI" id="CHEBI:46858"/>
        <dbReference type="ChEBI" id="CHEBI:83624"/>
        <dbReference type="ChEBI" id="CHEBI:456216"/>
        <dbReference type="EC" id="2.7.7.89"/>
    </reaction>
</comment>
<comment type="catalytic activity">
    <reaction evidence="1">
        <text>[glutamine synthetase]-L-tyrosine + ATP = [glutamine synthetase]-O(4)-(5'-adenylyl)-L-tyrosine + diphosphate</text>
        <dbReference type="Rhea" id="RHEA:18589"/>
        <dbReference type="Rhea" id="RHEA-COMP:10660"/>
        <dbReference type="Rhea" id="RHEA-COMP:10661"/>
        <dbReference type="ChEBI" id="CHEBI:30616"/>
        <dbReference type="ChEBI" id="CHEBI:33019"/>
        <dbReference type="ChEBI" id="CHEBI:46858"/>
        <dbReference type="ChEBI" id="CHEBI:83624"/>
        <dbReference type="EC" id="2.7.7.42"/>
    </reaction>
</comment>
<comment type="cofactor">
    <cofactor evidence="1">
        <name>Mg(2+)</name>
        <dbReference type="ChEBI" id="CHEBI:18420"/>
    </cofactor>
</comment>
<comment type="similarity">
    <text evidence="1">Belongs to the GlnE family.</text>
</comment>